<gene>
    <name evidence="2" type="primary">C21orf140</name>
    <name evidence="2" type="synonym">FAM243A</name>
</gene>
<reference key="1">
    <citation type="journal article" date="2000" name="Nature">
        <title>The DNA sequence of human chromosome 21.</title>
        <authorList>
            <person name="Hattori M."/>
            <person name="Fujiyama A."/>
            <person name="Taylor T.D."/>
            <person name="Watanabe H."/>
            <person name="Yada T."/>
            <person name="Park H.-S."/>
            <person name="Toyoda A."/>
            <person name="Ishii K."/>
            <person name="Totoki Y."/>
            <person name="Choi D.-K."/>
            <person name="Groner Y."/>
            <person name="Soeda E."/>
            <person name="Ohki M."/>
            <person name="Takagi T."/>
            <person name="Sakaki Y."/>
            <person name="Taudien S."/>
            <person name="Blechschmidt K."/>
            <person name="Polley A."/>
            <person name="Menzel U."/>
            <person name="Delabar J."/>
            <person name="Kumpf K."/>
            <person name="Lehmann R."/>
            <person name="Patterson D."/>
            <person name="Reichwald K."/>
            <person name="Rump A."/>
            <person name="Schillhabel M."/>
            <person name="Schudy A."/>
            <person name="Zimmermann W."/>
            <person name="Rosenthal A."/>
            <person name="Kudoh J."/>
            <person name="Shibuya K."/>
            <person name="Kawasaki K."/>
            <person name="Asakawa S."/>
            <person name="Shintani A."/>
            <person name="Sasaki T."/>
            <person name="Nagamine K."/>
            <person name="Mitsuyama S."/>
            <person name="Antonarakis S.E."/>
            <person name="Minoshima S."/>
            <person name="Shimizu N."/>
            <person name="Nordsiek G."/>
            <person name="Hornischer K."/>
            <person name="Brandt P."/>
            <person name="Scharfe M."/>
            <person name="Schoen O."/>
            <person name="Desario A."/>
            <person name="Reichelt J."/>
            <person name="Kauer G."/>
            <person name="Bloecker H."/>
            <person name="Ramser J."/>
            <person name="Beck A."/>
            <person name="Klages S."/>
            <person name="Hennig S."/>
            <person name="Riesselmann L."/>
            <person name="Dagand E."/>
            <person name="Wehrmeyer S."/>
            <person name="Borzym K."/>
            <person name="Gardiner K."/>
            <person name="Nizetic D."/>
            <person name="Francis F."/>
            <person name="Lehrach H."/>
            <person name="Reinhardt R."/>
            <person name="Yaspo M.-L."/>
        </authorList>
    </citation>
    <scope>NUCLEOTIDE SEQUENCE [LARGE SCALE GENOMIC DNA]</scope>
</reference>
<reference key="2">
    <citation type="journal article" date="2004" name="Genome Res.">
        <title>The status, quality, and expansion of the NIH full-length cDNA project: the Mammalian Gene Collection (MGC).</title>
        <authorList>
            <consortium name="The MGC Project Team"/>
        </authorList>
    </citation>
    <scope>NUCLEOTIDE SEQUENCE [LARGE SCALE MRNA] OF 148-251</scope>
</reference>
<comment type="similarity">
    <text evidence="1">Belongs to the FAM243 family.</text>
</comment>
<feature type="chain" id="PRO_0000415166" description="Uncharacterized protein C21orf140">
    <location>
        <begin position="1"/>
        <end position="251"/>
    </location>
</feature>
<protein>
    <recommendedName>
        <fullName evidence="1">Uncharacterized protein C21orf140</fullName>
    </recommendedName>
    <alternativeName>
        <fullName evidence="1">Protein FAM243A</fullName>
    </alternativeName>
</protein>
<name>F243A_HUMAN</name>
<dbReference type="EMBL" id="AP000322">
    <property type="status" value="NOT_ANNOTATED_CDS"/>
    <property type="molecule type" value="Genomic_DNA"/>
</dbReference>
<dbReference type="EMBL" id="AW664693">
    <property type="status" value="NOT_ANNOTATED_CDS"/>
    <property type="molecule type" value="mRNA"/>
</dbReference>
<dbReference type="CCDS" id="CCDS63357.1"/>
<dbReference type="RefSeq" id="NP_001269466.1">
    <property type="nucleotide sequence ID" value="NM_001282537.2"/>
</dbReference>
<dbReference type="RefSeq" id="XP_006724008.1">
    <property type="nucleotide sequence ID" value="XM_006723945.3"/>
</dbReference>
<dbReference type="RefSeq" id="XP_006726860.1">
    <property type="nucleotide sequence ID" value="XM_006726797.3"/>
</dbReference>
<dbReference type="IntAct" id="B9A014">
    <property type="interactions" value="1"/>
</dbReference>
<dbReference type="STRING" id="9606.ENSP00000386791"/>
<dbReference type="BioMuta" id="C21orf140"/>
<dbReference type="PaxDb" id="9606-ENSP00000386791"/>
<dbReference type="Antibodypedia" id="49023">
    <property type="antibodies" value="5 antibodies from 5 providers"/>
</dbReference>
<dbReference type="DNASU" id="101928147"/>
<dbReference type="Ensembl" id="ENST00000410005.2">
    <property type="protein sequence ID" value="ENSP00000386791.1"/>
    <property type="gene ID" value="ENSG00000222018.2"/>
</dbReference>
<dbReference type="GeneID" id="101928147"/>
<dbReference type="KEGG" id="hsa:101928147"/>
<dbReference type="MANE-Select" id="ENST00000410005.2">
    <property type="protein sequence ID" value="ENSP00000386791.1"/>
    <property type="RefSeq nucleotide sequence ID" value="NM_001282537.2"/>
    <property type="RefSeq protein sequence ID" value="NP_001269466.1"/>
</dbReference>
<dbReference type="UCSC" id="uc032pyo.2">
    <property type="organism name" value="human"/>
</dbReference>
<dbReference type="AGR" id="HGNC:39602"/>
<dbReference type="CTD" id="101928147"/>
<dbReference type="GeneCards" id="C21orf140"/>
<dbReference type="HGNC" id="HGNC:39602">
    <property type="gene designation" value="C21orf140"/>
</dbReference>
<dbReference type="HPA" id="ENSG00000222018">
    <property type="expression patterns" value="Low tissue specificity"/>
</dbReference>
<dbReference type="neXtProt" id="NX_B9A014"/>
<dbReference type="VEuPathDB" id="HostDB:ENSG00000222018"/>
<dbReference type="eggNOG" id="ENOG502RXAQ">
    <property type="taxonomic scope" value="Eukaryota"/>
</dbReference>
<dbReference type="GeneTree" id="ENSGT00390000010669"/>
<dbReference type="HOGENOM" id="CLU_1106831_0_0_1"/>
<dbReference type="InParanoid" id="B9A014"/>
<dbReference type="OMA" id="CIVHAGG"/>
<dbReference type="OrthoDB" id="2266637at2759"/>
<dbReference type="PAN-GO" id="B9A014">
    <property type="GO annotations" value="0 GO annotations based on evolutionary models"/>
</dbReference>
<dbReference type="PhylomeDB" id="B9A014"/>
<dbReference type="BioGRID-ORCS" id="101928147">
    <property type="hits" value="6 hits in 878 CRISPR screens"/>
</dbReference>
<dbReference type="BioGRID-ORCS" id="102723451">
    <property type="hits" value="0 hits in 4 CRISPR screens"/>
</dbReference>
<dbReference type="Pharos" id="B9A014">
    <property type="development level" value="Tdark"/>
</dbReference>
<dbReference type="PRO" id="PR:B9A014"/>
<dbReference type="Proteomes" id="UP000005640">
    <property type="component" value="Chromosome 21"/>
</dbReference>
<dbReference type="RNAct" id="B9A014">
    <property type="molecule type" value="protein"/>
</dbReference>
<dbReference type="Bgee" id="ENSG00000222018">
    <property type="expression patterns" value="Expressed in male germ line stem cell (sensu Vertebrata) in testis and 96 other cell types or tissues"/>
</dbReference>
<dbReference type="InterPro" id="IPR037728">
    <property type="entry name" value="C21orf140-like"/>
</dbReference>
<dbReference type="PANTHER" id="PTHR35969:SF1">
    <property type="entry name" value="FAMILY WITH SEQUENCE SIMILARITY 243 MEMBER A"/>
    <property type="match status" value="1"/>
</dbReference>
<dbReference type="PANTHER" id="PTHR35969">
    <property type="entry name" value="PROTEIN FAM243A-RELATED"/>
    <property type="match status" value="1"/>
</dbReference>
<proteinExistence type="evidence at transcript level"/>
<evidence type="ECO:0000305" key="1"/>
<evidence type="ECO:0000312" key="2">
    <source>
        <dbReference type="HGNC" id="HGNC:39602"/>
    </source>
</evidence>
<sequence length="251" mass="29214">MPRFASPLLRNVIIRSQFDGIKRKQCLQYLKTLRTLQYDGFKTVYFGETNIPESLVTGEDISDGYFIQTPTWCIVHAAGSQGWVPWKYRVFLRDELCIKQEDSLFSEFCDVVRKAYGKCVIVVKERRQQEEQRPKEDREAEGQFYIPTVISLASIMCCPEVAKSCGHELLSLPSPCNYLNPLDSAWSSLKWFIINNRNEFCLQSIDSGYSYQCILFSNLISKGIERINASKWRTLTSKVRRWENYYLGKFS</sequence>
<keyword id="KW-1185">Reference proteome</keyword>
<accession>B9A014</accession>
<organism>
    <name type="scientific">Homo sapiens</name>
    <name type="common">Human</name>
    <dbReference type="NCBI Taxonomy" id="9606"/>
    <lineage>
        <taxon>Eukaryota</taxon>
        <taxon>Metazoa</taxon>
        <taxon>Chordata</taxon>
        <taxon>Craniata</taxon>
        <taxon>Vertebrata</taxon>
        <taxon>Euteleostomi</taxon>
        <taxon>Mammalia</taxon>
        <taxon>Eutheria</taxon>
        <taxon>Euarchontoglires</taxon>
        <taxon>Primates</taxon>
        <taxon>Haplorrhini</taxon>
        <taxon>Catarrhini</taxon>
        <taxon>Hominidae</taxon>
        <taxon>Homo</taxon>
    </lineage>
</organism>